<protein>
    <recommendedName>
        <fullName>Sterol 24-C-methyltransferase</fullName>
        <ecNumber>2.1.1.41</ecNumber>
    </recommendedName>
    <alternativeName>
        <fullName>Delta(24)-sterol C-methyltransferase</fullName>
    </alternativeName>
</protein>
<gene>
    <name type="primary">ERG6</name>
    <name type="ORF">MGG_04346</name>
</gene>
<feature type="chain" id="PRO_0000124794" description="Sterol 24-C-methyltransferase">
    <location>
        <begin position="1"/>
        <end position="390"/>
    </location>
</feature>
<feature type="region of interest" description="Disordered" evidence="3">
    <location>
        <begin position="1"/>
        <end position="21"/>
    </location>
</feature>
<feature type="compositionally biased region" description="Polar residues" evidence="3">
    <location>
        <begin position="1"/>
        <end position="12"/>
    </location>
</feature>
<evidence type="ECO:0000250" key="1"/>
<evidence type="ECO:0000255" key="2">
    <source>
        <dbReference type="PROSITE-ProRule" id="PRU01022"/>
    </source>
</evidence>
<evidence type="ECO:0000256" key="3">
    <source>
        <dbReference type="SAM" id="MobiDB-lite"/>
    </source>
</evidence>
<accession>P0CT10</accession>
<accession>A4R5U1</accession>
<accession>G4NGD4</accession>
<accession>Q5EN22</accession>
<organism>
    <name type="scientific">Pyricularia oryzae (strain 70-15 / ATCC MYA-4617 / FGSC 8958)</name>
    <name type="common">Rice blast fungus</name>
    <name type="synonym">Magnaporthe oryzae</name>
    <dbReference type="NCBI Taxonomy" id="242507"/>
    <lineage>
        <taxon>Eukaryota</taxon>
        <taxon>Fungi</taxon>
        <taxon>Dikarya</taxon>
        <taxon>Ascomycota</taxon>
        <taxon>Pezizomycotina</taxon>
        <taxon>Sordariomycetes</taxon>
        <taxon>Sordariomycetidae</taxon>
        <taxon>Magnaporthales</taxon>
        <taxon>Pyriculariaceae</taxon>
        <taxon>Pyricularia</taxon>
    </lineage>
</organism>
<reference key="1">
    <citation type="journal article" date="2005" name="Nature">
        <title>The genome sequence of the rice blast fungus Magnaporthe grisea.</title>
        <authorList>
            <person name="Dean R.A."/>
            <person name="Talbot N.J."/>
            <person name="Ebbole D.J."/>
            <person name="Farman M.L."/>
            <person name="Mitchell T.K."/>
            <person name="Orbach M.J."/>
            <person name="Thon M.R."/>
            <person name="Kulkarni R."/>
            <person name="Xu J.-R."/>
            <person name="Pan H."/>
            <person name="Read N.D."/>
            <person name="Lee Y.-H."/>
            <person name="Carbone I."/>
            <person name="Brown D."/>
            <person name="Oh Y.Y."/>
            <person name="Donofrio N."/>
            <person name="Jeong J.S."/>
            <person name="Soanes D.M."/>
            <person name="Djonovic S."/>
            <person name="Kolomiets E."/>
            <person name="Rehmeyer C."/>
            <person name="Li W."/>
            <person name="Harding M."/>
            <person name="Kim S."/>
            <person name="Lebrun M.-H."/>
            <person name="Bohnert H."/>
            <person name="Coughlan S."/>
            <person name="Butler J."/>
            <person name="Calvo S.E."/>
            <person name="Ma L.-J."/>
            <person name="Nicol R."/>
            <person name="Purcell S."/>
            <person name="Nusbaum C."/>
            <person name="Galagan J.E."/>
            <person name="Birren B.W."/>
        </authorList>
    </citation>
    <scope>NUCLEOTIDE SEQUENCE [LARGE SCALE GENOMIC DNA]</scope>
    <source>
        <strain>70-15 / ATCC MYA-4617 / FGSC 8958</strain>
    </source>
</reference>
<comment type="function">
    <text evidence="1">Catalyzes the methyl transfer from S-adenosyl-methionine to the C-24 of zymosterol to form fecosterol.</text>
</comment>
<comment type="catalytic activity">
    <reaction>
        <text>zymosterol + S-adenosyl-L-methionine = fecosterol + S-adenosyl-L-homocysteine + H(+)</text>
        <dbReference type="Rhea" id="RHEA:21128"/>
        <dbReference type="ChEBI" id="CHEBI:15378"/>
        <dbReference type="ChEBI" id="CHEBI:17038"/>
        <dbReference type="ChEBI" id="CHEBI:18252"/>
        <dbReference type="ChEBI" id="CHEBI:57856"/>
        <dbReference type="ChEBI" id="CHEBI:59789"/>
        <dbReference type="EC" id="2.1.1.41"/>
    </reaction>
</comment>
<comment type="pathway">
    <text>Steroid metabolism; ergosterol biosynthesis; ergosterol from zymosterol: step 1/5.</text>
</comment>
<comment type="similarity">
    <text evidence="2">Belongs to the class I-like SAM-binding methyltransferase superfamily. Erg6/SMT family.</text>
</comment>
<dbReference type="EC" id="2.1.1.41"/>
<dbReference type="EMBL" id="CM001236">
    <property type="protein sequence ID" value="EHA47091.1"/>
    <property type="molecule type" value="Genomic_DNA"/>
</dbReference>
<dbReference type="RefSeq" id="XP_003719458.1">
    <property type="nucleotide sequence ID" value="XM_003719410.1"/>
</dbReference>
<dbReference type="SMR" id="P0CT10"/>
<dbReference type="FunCoup" id="P0CT10">
    <property type="interactions" value="296"/>
</dbReference>
<dbReference type="STRING" id="242507.P0CT10"/>
<dbReference type="EnsemblFungi" id="MGG_04346T0">
    <property type="protein sequence ID" value="MGG_04346T0"/>
    <property type="gene ID" value="MGG_04346"/>
</dbReference>
<dbReference type="GeneID" id="2677539"/>
<dbReference type="KEGG" id="mgr:MGG_04346"/>
<dbReference type="VEuPathDB" id="FungiDB:MGG_04346"/>
<dbReference type="eggNOG" id="KOG1269">
    <property type="taxonomic scope" value="Eukaryota"/>
</dbReference>
<dbReference type="HOGENOM" id="CLU_039068_5_3_1"/>
<dbReference type="InParanoid" id="P0CT10"/>
<dbReference type="OMA" id="NGIATMM"/>
<dbReference type="OrthoDB" id="540004at2759"/>
<dbReference type="UniPathway" id="UPA00768">
    <property type="reaction ID" value="UER00760"/>
</dbReference>
<dbReference type="Proteomes" id="UP000009058">
    <property type="component" value="Chromosome 6"/>
</dbReference>
<dbReference type="GO" id="GO:0005783">
    <property type="term" value="C:endoplasmic reticulum"/>
    <property type="evidence" value="ECO:0007669"/>
    <property type="project" value="TreeGrafter"/>
</dbReference>
<dbReference type="GO" id="GO:0003838">
    <property type="term" value="F:sterol 24-C-methyltransferase activity"/>
    <property type="evidence" value="ECO:0007669"/>
    <property type="project" value="UniProtKB-EC"/>
</dbReference>
<dbReference type="GO" id="GO:0006696">
    <property type="term" value="P:ergosterol biosynthetic process"/>
    <property type="evidence" value="ECO:0007669"/>
    <property type="project" value="TreeGrafter"/>
</dbReference>
<dbReference type="GO" id="GO:0032259">
    <property type="term" value="P:methylation"/>
    <property type="evidence" value="ECO:0007669"/>
    <property type="project" value="UniProtKB-KW"/>
</dbReference>
<dbReference type="CDD" id="cd02440">
    <property type="entry name" value="AdoMet_MTases"/>
    <property type="match status" value="1"/>
</dbReference>
<dbReference type="Gene3D" id="3.40.50.150">
    <property type="entry name" value="Vaccinia Virus protein VP39"/>
    <property type="match status" value="1"/>
</dbReference>
<dbReference type="InterPro" id="IPR050447">
    <property type="entry name" value="Erg6_SMT_methyltransf"/>
</dbReference>
<dbReference type="InterPro" id="IPR013216">
    <property type="entry name" value="Methyltransf_11"/>
</dbReference>
<dbReference type="InterPro" id="IPR030384">
    <property type="entry name" value="MeTrfase_SMT"/>
</dbReference>
<dbReference type="InterPro" id="IPR029063">
    <property type="entry name" value="SAM-dependent_MTases_sf"/>
</dbReference>
<dbReference type="InterPro" id="IPR013705">
    <property type="entry name" value="Sterol_MeTrfase_C"/>
</dbReference>
<dbReference type="PANTHER" id="PTHR44068:SF1">
    <property type="entry name" value="HYPOTHETICAL LOC100005854"/>
    <property type="match status" value="1"/>
</dbReference>
<dbReference type="PANTHER" id="PTHR44068">
    <property type="entry name" value="ZGC:194242"/>
    <property type="match status" value="1"/>
</dbReference>
<dbReference type="Pfam" id="PF08241">
    <property type="entry name" value="Methyltransf_11"/>
    <property type="match status" value="1"/>
</dbReference>
<dbReference type="Pfam" id="PF08498">
    <property type="entry name" value="Sterol_MT_C"/>
    <property type="match status" value="1"/>
</dbReference>
<dbReference type="SUPFAM" id="SSF53335">
    <property type="entry name" value="S-adenosyl-L-methionine-dependent methyltransferases"/>
    <property type="match status" value="1"/>
</dbReference>
<dbReference type="PROSITE" id="PS51685">
    <property type="entry name" value="SAM_MT_ERG6_SMT"/>
    <property type="match status" value="1"/>
</dbReference>
<sequence length="390" mass="43036">MSKQQHPSSKTQITRRRDTADMTFEQVLHKGSSANMGGLSSMLGKDREASKTAVDQYFRHWDGKTAKTETTKVREERKADYATLTRQYYNLVTDFYEYGWGQSFHFCTFAPGETFASAITRYEHTLAHRIGIKKGMKVLDIGCGVGGPARQIAKFTGANITGITINEYQVERARRYAEMEGYGAGEQLKFVQGDFMALPFEKETFDAVYSIEATVHAPKLEDVYKQIFNVLKPGGIFGLYEWVMTDAYDENDPHHKEIRFGIEHGGGIANLQTAQTAIAAIKAAGFELLESEDLADNSDRAPWYWPLGGNAWQYASTFGDILSTFTMTPAGRAIAHTVLGVVESIGLVPPGTKKTADSLSTTAAALVAGGKEGLFTPMFLMVARKPVAKE</sequence>
<name>ERG6_PYRO7</name>
<keyword id="KW-0444">Lipid biosynthesis</keyword>
<keyword id="KW-0443">Lipid metabolism</keyword>
<keyword id="KW-0489">Methyltransferase</keyword>
<keyword id="KW-1185">Reference proteome</keyword>
<keyword id="KW-0949">S-adenosyl-L-methionine</keyword>
<keyword id="KW-0752">Steroid biosynthesis</keyword>
<keyword id="KW-0753">Steroid metabolism</keyword>
<keyword id="KW-0756">Sterol biosynthesis</keyword>
<keyword id="KW-1207">Sterol metabolism</keyword>
<keyword id="KW-0808">Transferase</keyword>
<proteinExistence type="inferred from homology"/>